<evidence type="ECO:0000255" key="1">
    <source>
        <dbReference type="HAMAP-Rule" id="MF_00730"/>
    </source>
</evidence>
<organism>
    <name type="scientific">Vibrio parahaemolyticus serotype O3:K6 (strain RIMD 2210633)</name>
    <dbReference type="NCBI Taxonomy" id="223926"/>
    <lineage>
        <taxon>Bacteria</taxon>
        <taxon>Pseudomonadati</taxon>
        <taxon>Pseudomonadota</taxon>
        <taxon>Gammaproteobacteria</taxon>
        <taxon>Vibrionales</taxon>
        <taxon>Vibrionaceae</taxon>
        <taxon>Vibrio</taxon>
    </lineage>
</organism>
<gene>
    <name type="ordered locus">VP2128</name>
</gene>
<accession>Q87MV3</accession>
<comment type="subcellular location">
    <subcellularLocation>
        <location evidence="1">Cytoplasm</location>
        <location evidence="1">Nucleoid</location>
    </subcellularLocation>
</comment>
<comment type="similarity">
    <text evidence="1">Belongs to the YejK family.</text>
</comment>
<reference key="1">
    <citation type="journal article" date="2003" name="Lancet">
        <title>Genome sequence of Vibrio parahaemolyticus: a pathogenic mechanism distinct from that of V. cholerae.</title>
        <authorList>
            <person name="Makino K."/>
            <person name="Oshima K."/>
            <person name="Kurokawa K."/>
            <person name="Yokoyama K."/>
            <person name="Uda T."/>
            <person name="Tagomori K."/>
            <person name="Iijima Y."/>
            <person name="Najima M."/>
            <person name="Nakano M."/>
            <person name="Yamashita A."/>
            <person name="Kubota Y."/>
            <person name="Kimura S."/>
            <person name="Yasunaga T."/>
            <person name="Honda T."/>
            <person name="Shinagawa H."/>
            <person name="Hattori M."/>
            <person name="Iida T."/>
        </authorList>
    </citation>
    <scope>NUCLEOTIDE SEQUENCE [LARGE SCALE GENOMIC DNA]</scope>
    <source>
        <strain>RIMD 2210633</strain>
    </source>
</reference>
<protein>
    <recommendedName>
        <fullName evidence="1">Nucleoid-associated protein VP2128</fullName>
    </recommendedName>
</protein>
<proteinExistence type="inferred from homology"/>
<name>NDPA_VIBPA</name>
<feature type="chain" id="PRO_0000210922" description="Nucleoid-associated protein VP2128">
    <location>
        <begin position="1"/>
        <end position="332"/>
    </location>
</feature>
<keyword id="KW-0963">Cytoplasm</keyword>
<dbReference type="EMBL" id="BA000031">
    <property type="protein sequence ID" value="BAC60391.1"/>
    <property type="molecule type" value="Genomic_DNA"/>
</dbReference>
<dbReference type="RefSeq" id="NP_798507.1">
    <property type="nucleotide sequence ID" value="NC_004603.1"/>
</dbReference>
<dbReference type="SMR" id="Q87MV3"/>
<dbReference type="GeneID" id="1189640"/>
<dbReference type="KEGG" id="vpa:VP2128"/>
<dbReference type="PATRIC" id="fig|223926.6.peg.2036"/>
<dbReference type="eggNOG" id="COG3081">
    <property type="taxonomic scope" value="Bacteria"/>
</dbReference>
<dbReference type="HOGENOM" id="CLU_063050_0_1_6"/>
<dbReference type="Proteomes" id="UP000002493">
    <property type="component" value="Chromosome 1"/>
</dbReference>
<dbReference type="GO" id="GO:0043590">
    <property type="term" value="C:bacterial nucleoid"/>
    <property type="evidence" value="ECO:0007669"/>
    <property type="project" value="TreeGrafter"/>
</dbReference>
<dbReference type="GO" id="GO:0005737">
    <property type="term" value="C:cytoplasm"/>
    <property type="evidence" value="ECO:0007669"/>
    <property type="project" value="UniProtKB-UniRule"/>
</dbReference>
<dbReference type="GO" id="GO:0003690">
    <property type="term" value="F:double-stranded DNA binding"/>
    <property type="evidence" value="ECO:0007669"/>
    <property type="project" value="TreeGrafter"/>
</dbReference>
<dbReference type="GO" id="GO:0003727">
    <property type="term" value="F:single-stranded RNA binding"/>
    <property type="evidence" value="ECO:0007669"/>
    <property type="project" value="TreeGrafter"/>
</dbReference>
<dbReference type="HAMAP" id="MF_00730">
    <property type="entry name" value="NdpA"/>
    <property type="match status" value="1"/>
</dbReference>
<dbReference type="InterPro" id="IPR007358">
    <property type="entry name" value="Nucleoid_associated_NdpA"/>
</dbReference>
<dbReference type="NCBIfam" id="NF001557">
    <property type="entry name" value="PRK00378.1"/>
    <property type="match status" value="1"/>
</dbReference>
<dbReference type="PANTHER" id="PTHR38772">
    <property type="match status" value="1"/>
</dbReference>
<dbReference type="PANTHER" id="PTHR38772:SF1">
    <property type="entry name" value="NUCLEOID-ASSOCIATED PROTEIN YEJK"/>
    <property type="match status" value="1"/>
</dbReference>
<dbReference type="Pfam" id="PF04245">
    <property type="entry name" value="NA37"/>
    <property type="match status" value="1"/>
</dbReference>
<sequence length="332" mass="37793">MSLHLSNVILHQLCKNDQDELVVKLRPASLENDASTENLVAELHRVFHSKAGKGFGSFQSDSEFQFWLQEMRKGERDFYDFSQISANRLKEELIKYPFADEGILVFAEYQSLATDYLFIGILPMNQSLKVTEGLDISATDYLDITKMDIAARIDLSSYETDKESNRYLQYIKGRVGRKVADFFLDFLQADIGLDTKQQNLVLMQAVDDFCADSKLEKQEVNEYKKQVYNYCNEQIKSGEEVQISELSGELPPSQDGTSFMDFTKEQGYELEESFPGDRSTVRKLTKYVGAGGGLNISFDSLLLGERIFYDPETDTLTIKGTPPNLKDQLSRN</sequence>